<feature type="chain" id="PRO_0000345117" description="Sugar transporter SWEET1">
    <location>
        <begin position="1"/>
        <end position="221"/>
    </location>
</feature>
<feature type="transmembrane region" description="Helical; Name=1" evidence="2">
    <location>
        <begin position="3"/>
        <end position="23"/>
    </location>
</feature>
<feature type="transmembrane region" description="Helical; Name=2" evidence="2">
    <location>
        <begin position="43"/>
        <end position="63"/>
    </location>
</feature>
<feature type="transmembrane region" description="Helical; Name=3" evidence="2">
    <location>
        <begin position="68"/>
        <end position="88"/>
    </location>
</feature>
<feature type="transmembrane region" description="Helical; Name=4" evidence="2">
    <location>
        <begin position="102"/>
        <end position="122"/>
    </location>
</feature>
<feature type="transmembrane region" description="Helical; Name=5" evidence="2">
    <location>
        <begin position="129"/>
        <end position="149"/>
    </location>
</feature>
<feature type="transmembrane region" description="Helical; Name=6" evidence="2">
    <location>
        <begin position="160"/>
        <end position="180"/>
    </location>
</feature>
<feature type="transmembrane region" description="Helical; Name=7" evidence="2">
    <location>
        <begin position="186"/>
        <end position="206"/>
    </location>
</feature>
<feature type="domain" description="MtN3/slv 1">
    <location>
        <begin position="10"/>
        <end position="94"/>
    </location>
</feature>
<feature type="domain" description="MtN3/slv 2">
    <location>
        <begin position="127"/>
        <end position="212"/>
    </location>
</feature>
<feature type="region of interest" description="Mediates interaction with TRPV2" evidence="1">
    <location>
        <begin position="149"/>
        <end position="221"/>
    </location>
</feature>
<feature type="sequence conflict" description="In Ref. 1; CAA65438." evidence="5" ref="1">
    <original>T</original>
    <variation>A</variation>
    <location>
        <position position="188"/>
    </location>
</feature>
<name>SWET1_MOUSE</name>
<protein>
    <recommendedName>
        <fullName>Sugar transporter SWEET1</fullName>
        <shortName>MmSWEET1</shortName>
    </recommendedName>
    <alternativeName>
        <fullName>RAG1-activating protein 1</fullName>
    </alternativeName>
    <alternativeName>
        <fullName>Solute carrier family 50 member 1</fullName>
    </alternativeName>
</protein>
<comment type="function">
    <text evidence="1 4">Mediates sugar transport across membranes (By similarity). May regulate the expression of RAG1 a gene involved in V(D)J recombination.</text>
</comment>
<comment type="subunit">
    <text evidence="1">Interacts with TRPV2; the interaction probably occurs intracellularly and depends on TRPV2 N-glycosylation.</text>
</comment>
<comment type="subcellular location">
    <subcellularLocation>
        <location evidence="1">Golgi apparatus membrane</location>
        <topology evidence="1">Multi-pass membrane protein</topology>
    </subcellularLocation>
    <subcellularLocation>
        <location evidence="1">Cell membrane</location>
        <topology evidence="1">Multi-pass membrane protein</topology>
    </subcellularLocation>
    <text evidence="1">May also localize to the endoplasmic reticulum.</text>
</comment>
<comment type="tissue specificity">
    <text evidence="4">Expressed at high levels in lung, placenta, spleen and thymus, at intermediate levels in brain, heart, kidney and testis, and at low levels in bone marrow, liver and lymph node. Within the thymus expression is highest in non-lymphoid cells.</text>
</comment>
<comment type="induction">
    <text evidence="3">Up-regulated in mammary gland during lactation.</text>
</comment>
<comment type="similarity">
    <text evidence="5">Belongs to the SWEET sugar transporter family.</text>
</comment>
<sequence>MEAGGVADSFLSSACVLFTLGMFSTGLSDLRHMQRTRSVDNIQFLPFLTTDVNNLSWLSYGVLKGDGTLIIVNSVGAVLQTLYILAYLHYSPQKHGVLLQTATLLAVLLLGYGYFWLLVPDLEARLQQLGLFCSVFTISMYLSPLADLAKIVQTKSTQRLSFSLTIATLFCSASWSIYGFRLRDPYITVPNLPGILTSLIRLGLFCKYPPEQDRKYRLLQT</sequence>
<keyword id="KW-1003">Cell membrane</keyword>
<keyword id="KW-0333">Golgi apparatus</keyword>
<keyword id="KW-0472">Membrane</keyword>
<keyword id="KW-1185">Reference proteome</keyword>
<keyword id="KW-0677">Repeat</keyword>
<keyword id="KW-0762">Sugar transport</keyword>
<keyword id="KW-0812">Transmembrane</keyword>
<keyword id="KW-1133">Transmembrane helix</keyword>
<keyword id="KW-0813">Transport</keyword>
<evidence type="ECO:0000250" key="1"/>
<evidence type="ECO:0000255" key="2"/>
<evidence type="ECO:0000269" key="3">
    <source>
    </source>
</evidence>
<evidence type="ECO:0000269" key="4">
    <source>
    </source>
</evidence>
<evidence type="ECO:0000305" key="5"/>
<reference key="1">
    <citation type="journal article" date="1996" name="Biochem. Biophys. Res. Commun.">
        <title>Molecular cloning and characterization of a novel stromal cell-derived cDNA encoding a protein that facilitates gene activation of recombination activating gene (RAG)-1 in human lymphoid progenitors.</title>
        <authorList>
            <person name="Tagoh H."/>
            <person name="Kishi H."/>
            <person name="Muraguchi A."/>
        </authorList>
    </citation>
    <scope>NUCLEOTIDE SEQUENCE [MRNA]</scope>
    <scope>FUNCTION</scope>
    <scope>TISSUE SPECIFICITY</scope>
    <source>
        <strain>C57BL/6J</strain>
    </source>
</reference>
<reference key="2">
    <citation type="journal article" date="2005" name="Science">
        <title>The transcriptional landscape of the mammalian genome.</title>
        <authorList>
            <person name="Carninci P."/>
            <person name="Kasukawa T."/>
            <person name="Katayama S."/>
            <person name="Gough J."/>
            <person name="Frith M.C."/>
            <person name="Maeda N."/>
            <person name="Oyama R."/>
            <person name="Ravasi T."/>
            <person name="Lenhard B."/>
            <person name="Wells C."/>
            <person name="Kodzius R."/>
            <person name="Shimokawa K."/>
            <person name="Bajic V.B."/>
            <person name="Brenner S.E."/>
            <person name="Batalov S."/>
            <person name="Forrest A.R."/>
            <person name="Zavolan M."/>
            <person name="Davis M.J."/>
            <person name="Wilming L.G."/>
            <person name="Aidinis V."/>
            <person name="Allen J.E."/>
            <person name="Ambesi-Impiombato A."/>
            <person name="Apweiler R."/>
            <person name="Aturaliya R.N."/>
            <person name="Bailey T.L."/>
            <person name="Bansal M."/>
            <person name="Baxter L."/>
            <person name="Beisel K.W."/>
            <person name="Bersano T."/>
            <person name="Bono H."/>
            <person name="Chalk A.M."/>
            <person name="Chiu K.P."/>
            <person name="Choudhary V."/>
            <person name="Christoffels A."/>
            <person name="Clutterbuck D.R."/>
            <person name="Crowe M.L."/>
            <person name="Dalla E."/>
            <person name="Dalrymple B.P."/>
            <person name="de Bono B."/>
            <person name="Della Gatta G."/>
            <person name="di Bernardo D."/>
            <person name="Down T."/>
            <person name="Engstrom P."/>
            <person name="Fagiolini M."/>
            <person name="Faulkner G."/>
            <person name="Fletcher C.F."/>
            <person name="Fukushima T."/>
            <person name="Furuno M."/>
            <person name="Futaki S."/>
            <person name="Gariboldi M."/>
            <person name="Georgii-Hemming P."/>
            <person name="Gingeras T.R."/>
            <person name="Gojobori T."/>
            <person name="Green R.E."/>
            <person name="Gustincich S."/>
            <person name="Harbers M."/>
            <person name="Hayashi Y."/>
            <person name="Hensch T.K."/>
            <person name="Hirokawa N."/>
            <person name="Hill D."/>
            <person name="Huminiecki L."/>
            <person name="Iacono M."/>
            <person name="Ikeo K."/>
            <person name="Iwama A."/>
            <person name="Ishikawa T."/>
            <person name="Jakt M."/>
            <person name="Kanapin A."/>
            <person name="Katoh M."/>
            <person name="Kawasawa Y."/>
            <person name="Kelso J."/>
            <person name="Kitamura H."/>
            <person name="Kitano H."/>
            <person name="Kollias G."/>
            <person name="Krishnan S.P."/>
            <person name="Kruger A."/>
            <person name="Kummerfeld S.K."/>
            <person name="Kurochkin I.V."/>
            <person name="Lareau L.F."/>
            <person name="Lazarevic D."/>
            <person name="Lipovich L."/>
            <person name="Liu J."/>
            <person name="Liuni S."/>
            <person name="McWilliam S."/>
            <person name="Madan Babu M."/>
            <person name="Madera M."/>
            <person name="Marchionni L."/>
            <person name="Matsuda H."/>
            <person name="Matsuzawa S."/>
            <person name="Miki H."/>
            <person name="Mignone F."/>
            <person name="Miyake S."/>
            <person name="Morris K."/>
            <person name="Mottagui-Tabar S."/>
            <person name="Mulder N."/>
            <person name="Nakano N."/>
            <person name="Nakauchi H."/>
            <person name="Ng P."/>
            <person name="Nilsson R."/>
            <person name="Nishiguchi S."/>
            <person name="Nishikawa S."/>
            <person name="Nori F."/>
            <person name="Ohara O."/>
            <person name="Okazaki Y."/>
            <person name="Orlando V."/>
            <person name="Pang K.C."/>
            <person name="Pavan W.J."/>
            <person name="Pavesi G."/>
            <person name="Pesole G."/>
            <person name="Petrovsky N."/>
            <person name="Piazza S."/>
            <person name="Reed J."/>
            <person name="Reid J.F."/>
            <person name="Ring B.Z."/>
            <person name="Ringwald M."/>
            <person name="Rost B."/>
            <person name="Ruan Y."/>
            <person name="Salzberg S.L."/>
            <person name="Sandelin A."/>
            <person name="Schneider C."/>
            <person name="Schoenbach C."/>
            <person name="Sekiguchi K."/>
            <person name="Semple C.A."/>
            <person name="Seno S."/>
            <person name="Sessa L."/>
            <person name="Sheng Y."/>
            <person name="Shibata Y."/>
            <person name="Shimada H."/>
            <person name="Shimada K."/>
            <person name="Silva D."/>
            <person name="Sinclair B."/>
            <person name="Sperling S."/>
            <person name="Stupka E."/>
            <person name="Sugiura K."/>
            <person name="Sultana R."/>
            <person name="Takenaka Y."/>
            <person name="Taki K."/>
            <person name="Tammoja K."/>
            <person name="Tan S.L."/>
            <person name="Tang S."/>
            <person name="Taylor M.S."/>
            <person name="Tegner J."/>
            <person name="Teichmann S.A."/>
            <person name="Ueda H.R."/>
            <person name="van Nimwegen E."/>
            <person name="Verardo R."/>
            <person name="Wei C.L."/>
            <person name="Yagi K."/>
            <person name="Yamanishi H."/>
            <person name="Zabarovsky E."/>
            <person name="Zhu S."/>
            <person name="Zimmer A."/>
            <person name="Hide W."/>
            <person name="Bult C."/>
            <person name="Grimmond S.M."/>
            <person name="Teasdale R.D."/>
            <person name="Liu E.T."/>
            <person name="Brusic V."/>
            <person name="Quackenbush J."/>
            <person name="Wahlestedt C."/>
            <person name="Mattick J.S."/>
            <person name="Hume D.A."/>
            <person name="Kai C."/>
            <person name="Sasaki D."/>
            <person name="Tomaru Y."/>
            <person name="Fukuda S."/>
            <person name="Kanamori-Katayama M."/>
            <person name="Suzuki M."/>
            <person name="Aoki J."/>
            <person name="Arakawa T."/>
            <person name="Iida J."/>
            <person name="Imamura K."/>
            <person name="Itoh M."/>
            <person name="Kato T."/>
            <person name="Kawaji H."/>
            <person name="Kawagashira N."/>
            <person name="Kawashima T."/>
            <person name="Kojima M."/>
            <person name="Kondo S."/>
            <person name="Konno H."/>
            <person name="Nakano K."/>
            <person name="Ninomiya N."/>
            <person name="Nishio T."/>
            <person name="Okada M."/>
            <person name="Plessy C."/>
            <person name="Shibata K."/>
            <person name="Shiraki T."/>
            <person name="Suzuki S."/>
            <person name="Tagami M."/>
            <person name="Waki K."/>
            <person name="Watahiki A."/>
            <person name="Okamura-Oho Y."/>
            <person name="Suzuki H."/>
            <person name="Kawai J."/>
            <person name="Hayashizaki Y."/>
        </authorList>
    </citation>
    <scope>NUCLEOTIDE SEQUENCE [LARGE SCALE MRNA]</scope>
    <source>
        <strain>C57BL/6J</strain>
        <strain>NOD</strain>
        <tissue>Head</tissue>
    </source>
</reference>
<reference key="3">
    <citation type="journal article" date="2004" name="Genome Res.">
        <title>The status, quality, and expansion of the NIH full-length cDNA project: the Mammalian Gene Collection (MGC).</title>
        <authorList>
            <consortium name="The MGC Project Team"/>
        </authorList>
    </citation>
    <scope>NUCLEOTIDE SEQUENCE [LARGE SCALE MRNA]</scope>
    <source>
        <strain>FVB/N</strain>
        <tissue>Salivary gland</tissue>
    </source>
</reference>
<reference key="4">
    <citation type="journal article" date="2010" name="Nature">
        <title>Sugar transporters for intercellular exchange and nutrition of pathogens.</title>
        <authorList>
            <person name="Chen L.-Q."/>
            <person name="Hou B.-H."/>
            <person name="Lalonde S."/>
            <person name="Takanaga H."/>
            <person name="Hartung M.L."/>
            <person name="Qu X.-Q."/>
            <person name="Guo W.-J."/>
            <person name="Kim J.-G."/>
            <person name="Underwood W."/>
            <person name="Chaudhuri B."/>
            <person name="Chermak D."/>
            <person name="Antony G."/>
            <person name="White F.F."/>
            <person name="Somerville S.C."/>
            <person name="Mudgett M.B."/>
            <person name="Frommer W.B."/>
        </authorList>
    </citation>
    <scope>INDUCTION</scope>
</reference>
<proteinExistence type="evidence at transcript level"/>
<accession>Q9CXK4</accession>
<accession>Q62275</accession>
<dbReference type="EMBL" id="X96618">
    <property type="protein sequence ID" value="CAA65438.1"/>
    <property type="molecule type" value="mRNA"/>
</dbReference>
<dbReference type="EMBL" id="AK014305">
    <property type="protein sequence ID" value="BAB29259.1"/>
    <property type="molecule type" value="mRNA"/>
</dbReference>
<dbReference type="EMBL" id="AK170162">
    <property type="protein sequence ID" value="BAE41608.1"/>
    <property type="molecule type" value="mRNA"/>
</dbReference>
<dbReference type="EMBL" id="BC014292">
    <property type="protein sequence ID" value="AAH14292.1"/>
    <property type="molecule type" value="mRNA"/>
</dbReference>
<dbReference type="CCDS" id="CCDS17500.1"/>
<dbReference type="PIR" id="JC4761">
    <property type="entry name" value="JC4761"/>
</dbReference>
<dbReference type="RefSeq" id="NP_033083.2">
    <property type="nucleotide sequence ID" value="NM_009057.4"/>
</dbReference>
<dbReference type="SMR" id="Q9CXK4"/>
<dbReference type="FunCoup" id="Q9CXK4">
    <property type="interactions" value="1069"/>
</dbReference>
<dbReference type="STRING" id="10090.ENSMUSP00000029565"/>
<dbReference type="TCDB" id="2.A.123.1.8">
    <property type="family name" value="the sweet, pq-loop, saliva, mtn3 (sweet) family"/>
</dbReference>
<dbReference type="PhosphoSitePlus" id="Q9CXK4"/>
<dbReference type="SwissPalm" id="Q9CXK4"/>
<dbReference type="PaxDb" id="10090-ENSMUSP00000029565"/>
<dbReference type="ProteomicsDB" id="254787"/>
<dbReference type="Pumba" id="Q9CXK4"/>
<dbReference type="Antibodypedia" id="3097">
    <property type="antibodies" value="62 antibodies from 18 providers"/>
</dbReference>
<dbReference type="DNASU" id="19729"/>
<dbReference type="Ensembl" id="ENSMUST00000029565.11">
    <property type="protein sequence ID" value="ENSMUSP00000029565.5"/>
    <property type="gene ID" value="ENSMUSG00000027953.14"/>
</dbReference>
<dbReference type="GeneID" id="19729"/>
<dbReference type="KEGG" id="mmu:19729"/>
<dbReference type="UCSC" id="uc008pyn.2">
    <property type="organism name" value="mouse"/>
</dbReference>
<dbReference type="AGR" id="MGI:107417"/>
<dbReference type="CTD" id="55974"/>
<dbReference type="MGI" id="MGI:107417">
    <property type="gene designation" value="Slc50a1"/>
</dbReference>
<dbReference type="VEuPathDB" id="HostDB:ENSMUSG00000027953"/>
<dbReference type="eggNOG" id="KOG1623">
    <property type="taxonomic scope" value="Eukaryota"/>
</dbReference>
<dbReference type="GeneTree" id="ENSGT00390000007801"/>
<dbReference type="InParanoid" id="Q9CXK4"/>
<dbReference type="OMA" id="QLNDYYI"/>
<dbReference type="OrthoDB" id="409725at2759"/>
<dbReference type="PhylomeDB" id="Q9CXK4"/>
<dbReference type="TreeFam" id="TF313635"/>
<dbReference type="Reactome" id="R-MMU-189200">
    <property type="pathway name" value="Cellular hexose transport"/>
</dbReference>
<dbReference type="BioGRID-ORCS" id="19729">
    <property type="hits" value="4 hits in 78 CRISPR screens"/>
</dbReference>
<dbReference type="ChiTaRS" id="Slc50a1">
    <property type="organism name" value="mouse"/>
</dbReference>
<dbReference type="PRO" id="PR:Q9CXK4"/>
<dbReference type="Proteomes" id="UP000000589">
    <property type="component" value="Chromosome 3"/>
</dbReference>
<dbReference type="RNAct" id="Q9CXK4">
    <property type="molecule type" value="protein"/>
</dbReference>
<dbReference type="Bgee" id="ENSMUSG00000027953">
    <property type="expression patterns" value="Expressed in peripheral lymph node and 241 other cell types or tissues"/>
</dbReference>
<dbReference type="ExpressionAtlas" id="Q9CXK4">
    <property type="expression patterns" value="baseline and differential"/>
</dbReference>
<dbReference type="GO" id="GO:0000139">
    <property type="term" value="C:Golgi membrane"/>
    <property type="evidence" value="ECO:0007669"/>
    <property type="project" value="UniProtKB-SubCell"/>
</dbReference>
<dbReference type="GO" id="GO:0005886">
    <property type="term" value="C:plasma membrane"/>
    <property type="evidence" value="ECO:0007669"/>
    <property type="project" value="UniProtKB-SubCell"/>
</dbReference>
<dbReference type="GO" id="GO:0042947">
    <property type="term" value="F:glucoside transmembrane transporter activity"/>
    <property type="evidence" value="ECO:0007669"/>
    <property type="project" value="Ensembl"/>
</dbReference>
<dbReference type="GO" id="GO:0051119">
    <property type="term" value="F:sugar transmembrane transporter activity"/>
    <property type="evidence" value="ECO:0000250"/>
    <property type="project" value="UniProtKB"/>
</dbReference>
<dbReference type="FunFam" id="1.20.1280.290:FF:000021">
    <property type="entry name" value="Solute carrier family 50 member 1"/>
    <property type="match status" value="1"/>
</dbReference>
<dbReference type="FunFam" id="1.20.1280.290:FF:000010">
    <property type="entry name" value="Sugar transporter SWEET"/>
    <property type="match status" value="1"/>
</dbReference>
<dbReference type="Gene3D" id="1.20.1280.290">
    <property type="match status" value="2"/>
</dbReference>
<dbReference type="InterPro" id="IPR047664">
    <property type="entry name" value="SWEET"/>
</dbReference>
<dbReference type="InterPro" id="IPR004316">
    <property type="entry name" value="SWEET_rpt"/>
</dbReference>
<dbReference type="PANTHER" id="PTHR10791">
    <property type="entry name" value="RAG1-ACTIVATING PROTEIN 1"/>
    <property type="match status" value="1"/>
</dbReference>
<dbReference type="PANTHER" id="PTHR10791:SF30">
    <property type="entry name" value="SUGAR TRANSPORTER SWEET1"/>
    <property type="match status" value="1"/>
</dbReference>
<dbReference type="Pfam" id="PF03083">
    <property type="entry name" value="MtN3_slv"/>
    <property type="match status" value="2"/>
</dbReference>
<gene>
    <name type="primary">Slc50a1</name>
    <name type="synonym">Rag1ap1</name>
    <name type="synonym">Rga</name>
</gene>
<organism>
    <name type="scientific">Mus musculus</name>
    <name type="common">Mouse</name>
    <dbReference type="NCBI Taxonomy" id="10090"/>
    <lineage>
        <taxon>Eukaryota</taxon>
        <taxon>Metazoa</taxon>
        <taxon>Chordata</taxon>
        <taxon>Craniata</taxon>
        <taxon>Vertebrata</taxon>
        <taxon>Euteleostomi</taxon>
        <taxon>Mammalia</taxon>
        <taxon>Eutheria</taxon>
        <taxon>Euarchontoglires</taxon>
        <taxon>Glires</taxon>
        <taxon>Rodentia</taxon>
        <taxon>Myomorpha</taxon>
        <taxon>Muroidea</taxon>
        <taxon>Muridae</taxon>
        <taxon>Murinae</taxon>
        <taxon>Mus</taxon>
        <taxon>Mus</taxon>
    </lineage>
</organism>